<evidence type="ECO:0000255" key="1">
    <source>
        <dbReference type="HAMAP-Rule" id="MF_01325"/>
    </source>
</evidence>
<evidence type="ECO:0000305" key="2"/>
<proteinExistence type="inferred from homology"/>
<reference key="1">
    <citation type="journal article" date="2003" name="Science">
        <title>A genomic view of the human-Bacteroides thetaiotaomicron symbiosis.</title>
        <authorList>
            <person name="Xu J."/>
            <person name="Bjursell M.K."/>
            <person name="Himrod J."/>
            <person name="Deng S."/>
            <person name="Carmichael L.K."/>
            <person name="Chiang H.C."/>
            <person name="Hooper L.V."/>
            <person name="Gordon J.I."/>
        </authorList>
    </citation>
    <scope>NUCLEOTIDE SEQUENCE [LARGE SCALE GENOMIC DNA]</scope>
    <source>
        <strain>ATCC 29148 / DSM 2079 / JCM 5827 / CCUG 10774 / NCTC 10582 / VPI-5482 / E50</strain>
    </source>
</reference>
<dbReference type="EMBL" id="AE015928">
    <property type="protein sequence ID" value="AAO77833.1"/>
    <property type="molecule type" value="Genomic_DNA"/>
</dbReference>
<dbReference type="RefSeq" id="NP_811639.1">
    <property type="nucleotide sequence ID" value="NC_004663.1"/>
</dbReference>
<dbReference type="RefSeq" id="WP_008762034.1">
    <property type="nucleotide sequence ID" value="NZ_UYXG01000001.1"/>
</dbReference>
<dbReference type="SMR" id="Q8A476"/>
<dbReference type="FunCoup" id="Q8A476">
    <property type="interactions" value="635"/>
</dbReference>
<dbReference type="STRING" id="226186.BT_2727"/>
<dbReference type="PaxDb" id="226186-BT_2727"/>
<dbReference type="EnsemblBacteria" id="AAO77833">
    <property type="protein sequence ID" value="AAO77833"/>
    <property type="gene ID" value="BT_2727"/>
</dbReference>
<dbReference type="GeneID" id="69587587"/>
<dbReference type="KEGG" id="bth:BT_2727"/>
<dbReference type="PATRIC" id="fig|226186.12.peg.2770"/>
<dbReference type="eggNOG" id="COG0087">
    <property type="taxonomic scope" value="Bacteria"/>
</dbReference>
<dbReference type="HOGENOM" id="CLU_044142_4_1_10"/>
<dbReference type="InParanoid" id="Q8A476"/>
<dbReference type="OrthoDB" id="9806135at2"/>
<dbReference type="Proteomes" id="UP000001414">
    <property type="component" value="Chromosome"/>
</dbReference>
<dbReference type="GO" id="GO:0022625">
    <property type="term" value="C:cytosolic large ribosomal subunit"/>
    <property type="evidence" value="ECO:0000318"/>
    <property type="project" value="GO_Central"/>
</dbReference>
<dbReference type="GO" id="GO:0019843">
    <property type="term" value="F:rRNA binding"/>
    <property type="evidence" value="ECO:0007669"/>
    <property type="project" value="UniProtKB-UniRule"/>
</dbReference>
<dbReference type="GO" id="GO:0003735">
    <property type="term" value="F:structural constituent of ribosome"/>
    <property type="evidence" value="ECO:0000318"/>
    <property type="project" value="GO_Central"/>
</dbReference>
<dbReference type="GO" id="GO:0006412">
    <property type="term" value="P:translation"/>
    <property type="evidence" value="ECO:0007669"/>
    <property type="project" value="UniProtKB-UniRule"/>
</dbReference>
<dbReference type="FunFam" id="2.40.30.10:FF:000047">
    <property type="entry name" value="50S ribosomal protein L3"/>
    <property type="match status" value="1"/>
</dbReference>
<dbReference type="FunFam" id="3.30.160.810:FF:000001">
    <property type="entry name" value="50S ribosomal protein L3"/>
    <property type="match status" value="1"/>
</dbReference>
<dbReference type="Gene3D" id="3.30.160.810">
    <property type="match status" value="1"/>
</dbReference>
<dbReference type="Gene3D" id="2.40.30.10">
    <property type="entry name" value="Translation factors"/>
    <property type="match status" value="1"/>
</dbReference>
<dbReference type="HAMAP" id="MF_01325_B">
    <property type="entry name" value="Ribosomal_uL3_B"/>
    <property type="match status" value="1"/>
</dbReference>
<dbReference type="InterPro" id="IPR000597">
    <property type="entry name" value="Ribosomal_uL3"/>
</dbReference>
<dbReference type="InterPro" id="IPR019927">
    <property type="entry name" value="Ribosomal_uL3_bac/org-type"/>
</dbReference>
<dbReference type="InterPro" id="IPR019926">
    <property type="entry name" value="Ribosomal_uL3_CS"/>
</dbReference>
<dbReference type="InterPro" id="IPR009000">
    <property type="entry name" value="Transl_B-barrel_sf"/>
</dbReference>
<dbReference type="NCBIfam" id="TIGR03625">
    <property type="entry name" value="L3_bact"/>
    <property type="match status" value="1"/>
</dbReference>
<dbReference type="PANTHER" id="PTHR11229">
    <property type="entry name" value="50S RIBOSOMAL PROTEIN L3"/>
    <property type="match status" value="1"/>
</dbReference>
<dbReference type="PANTHER" id="PTHR11229:SF16">
    <property type="entry name" value="LARGE RIBOSOMAL SUBUNIT PROTEIN UL3C"/>
    <property type="match status" value="1"/>
</dbReference>
<dbReference type="Pfam" id="PF00297">
    <property type="entry name" value="Ribosomal_L3"/>
    <property type="match status" value="1"/>
</dbReference>
<dbReference type="SUPFAM" id="SSF50447">
    <property type="entry name" value="Translation proteins"/>
    <property type="match status" value="1"/>
</dbReference>
<dbReference type="PROSITE" id="PS00474">
    <property type="entry name" value="RIBOSOMAL_L3"/>
    <property type="match status" value="1"/>
</dbReference>
<name>RL3_BACTN</name>
<sequence>MPGLLGKKIGMTSVFSADGKNVPCTVIEAGPCVVTQVKTVEKDGYAAVQLGFQDKKEKHTTKPLMGHFKRAGVTPKRHLAEFKEFETELNLGDTITVEMFNDATFVDVVGTSKGKGFQGVVKRHGFGGVGQATHGQHNRARKPGSIGACSYPAKVFKGMRMGGQLGGDRVTVQNLQVLKVIADHNLLLIKGSIPGCKGSIVIIEK</sequence>
<gene>
    <name evidence="1" type="primary">rplC</name>
    <name type="ordered locus">BT_2727</name>
</gene>
<feature type="chain" id="PRO_0000077067" description="Large ribosomal subunit protein uL3">
    <location>
        <begin position="1"/>
        <end position="205"/>
    </location>
</feature>
<accession>Q8A476</accession>
<comment type="function">
    <text evidence="1">One of the primary rRNA binding proteins, it binds directly near the 3'-end of the 23S rRNA, where it nucleates assembly of the 50S subunit.</text>
</comment>
<comment type="subunit">
    <text evidence="1">Part of the 50S ribosomal subunit. Forms a cluster with proteins L14 and L19.</text>
</comment>
<comment type="similarity">
    <text evidence="1">Belongs to the universal ribosomal protein uL3 family.</text>
</comment>
<protein>
    <recommendedName>
        <fullName evidence="1">Large ribosomal subunit protein uL3</fullName>
    </recommendedName>
    <alternativeName>
        <fullName evidence="2">50S ribosomal protein L3</fullName>
    </alternativeName>
</protein>
<keyword id="KW-1185">Reference proteome</keyword>
<keyword id="KW-0687">Ribonucleoprotein</keyword>
<keyword id="KW-0689">Ribosomal protein</keyword>
<keyword id="KW-0694">RNA-binding</keyword>
<keyword id="KW-0699">rRNA-binding</keyword>
<organism>
    <name type="scientific">Bacteroides thetaiotaomicron (strain ATCC 29148 / DSM 2079 / JCM 5827 / CCUG 10774 / NCTC 10582 / VPI-5482 / E50)</name>
    <dbReference type="NCBI Taxonomy" id="226186"/>
    <lineage>
        <taxon>Bacteria</taxon>
        <taxon>Pseudomonadati</taxon>
        <taxon>Bacteroidota</taxon>
        <taxon>Bacteroidia</taxon>
        <taxon>Bacteroidales</taxon>
        <taxon>Bacteroidaceae</taxon>
        <taxon>Bacteroides</taxon>
    </lineage>
</organism>